<proteinExistence type="evidence at protein level"/>
<keyword id="KW-0016">Alginate biosynthesis</keyword>
<keyword id="KW-0413">Isomerase</keyword>
<keyword id="KW-0574">Periplasm</keyword>
<keyword id="KW-0677">Repeat</keyword>
<keyword id="KW-0732">Signal</keyword>
<name>ALGG_PSEFL</name>
<organism>
    <name type="scientific">Pseudomonas fluorescens</name>
    <dbReference type="NCBI Taxonomy" id="294"/>
    <lineage>
        <taxon>Bacteria</taxon>
        <taxon>Pseudomonadati</taxon>
        <taxon>Pseudomonadota</taxon>
        <taxon>Gammaproteobacteria</taxon>
        <taxon>Pseudomonadales</taxon>
        <taxon>Pseudomonadaceae</taxon>
        <taxon>Pseudomonas</taxon>
    </lineage>
</organism>
<gene>
    <name evidence="6" type="primary">algG</name>
</gene>
<evidence type="ECO:0000250" key="1">
    <source>
        <dbReference type="UniProtKB" id="Q51371"/>
    </source>
</evidence>
<evidence type="ECO:0000250" key="2">
    <source>
        <dbReference type="UniProtKB" id="Q887Q3"/>
    </source>
</evidence>
<evidence type="ECO:0000255" key="3"/>
<evidence type="ECO:0000269" key="4">
    <source>
    </source>
</evidence>
<evidence type="ECO:0000269" key="5">
    <source>
    </source>
</evidence>
<evidence type="ECO:0000303" key="6">
    <source>
    </source>
</evidence>
<evidence type="ECO:0000305" key="7"/>
<sequence length="529" mass="58203">MGACAMNPQALKGSAMLAAAMLLASGAAMADVAPQAKAPTIAKELQQAKTYTISSPPTAPLEMAKPALPALSGYTDAAMEKKIVRAKPGKISIRRMMQEDALKDFIGGDNKMAEWVVRQHGIPQAIFIDDGYMNLKDLLGKVPKQYLSETSPGVFLAKLPIVVGRKGILEIDKKTQELRLSQEAGSFLINDGQLFVRDTKVTGWSEKANGPALYKSPKEFRPFLLAWGGTETYISNTKMASFGYANSKSYGVSISQYTPNMAKVLKRPEPTGWIIDSEFSDMWYGFYCYETTGFVIKGNTYKDNIVYGIDPHDRSHGLIIADNTVYGTKKKHGIIISREVNDSFIFNNRSYDNKLSGLVLDRNSVNNFVADNEFYRNHTDGITLYESGDNLLWGNKVIANRRHGIRVRNSVNIKLYENTSMANGLTGLYGHIKDLTDTDRDIALDPFDAKVSLIVVGGELAGNGSGPLSIDSPLSVELYRVSMLAPTKSSGISFNGVLGDRQEEILDLLVRQQKAVLIDPVERQTELQD</sequence>
<dbReference type="EC" id="5.1.3.37" evidence="4"/>
<dbReference type="EMBL" id="AF527790">
    <property type="protein sequence ID" value="AAP46694.1"/>
    <property type="molecule type" value="Genomic_DNA"/>
</dbReference>
<dbReference type="SMR" id="P59828"/>
<dbReference type="eggNOG" id="COG3420">
    <property type="taxonomic scope" value="Bacteria"/>
</dbReference>
<dbReference type="BRENDA" id="5.1.3.37">
    <property type="organism ID" value="5121"/>
</dbReference>
<dbReference type="UniPathway" id="UPA00286"/>
<dbReference type="GO" id="GO:0042597">
    <property type="term" value="C:periplasmic space"/>
    <property type="evidence" value="ECO:0007669"/>
    <property type="project" value="UniProtKB-SubCell"/>
</dbReference>
<dbReference type="GO" id="GO:0016853">
    <property type="term" value="F:isomerase activity"/>
    <property type="evidence" value="ECO:0007669"/>
    <property type="project" value="UniProtKB-KW"/>
</dbReference>
<dbReference type="GO" id="GO:0042121">
    <property type="term" value="P:alginic acid biosynthetic process"/>
    <property type="evidence" value="ECO:0007669"/>
    <property type="project" value="UniProtKB-UniPathway"/>
</dbReference>
<dbReference type="Gene3D" id="2.160.20.10">
    <property type="entry name" value="Single-stranded right-handed beta-helix, Pectin lyase-like"/>
    <property type="match status" value="1"/>
</dbReference>
<dbReference type="InterPro" id="IPR039448">
    <property type="entry name" value="Beta_helix"/>
</dbReference>
<dbReference type="InterPro" id="IPR006633">
    <property type="entry name" value="Carb-bd_sugar_hydrolysis-dom"/>
</dbReference>
<dbReference type="InterPro" id="IPR053409">
    <property type="entry name" value="Mannuronan_C5-epimerase"/>
</dbReference>
<dbReference type="InterPro" id="IPR022441">
    <property type="entry name" value="Para_beta_helix_rpt-2"/>
</dbReference>
<dbReference type="InterPro" id="IPR006626">
    <property type="entry name" value="PbH1"/>
</dbReference>
<dbReference type="InterPro" id="IPR012334">
    <property type="entry name" value="Pectin_lyas_fold"/>
</dbReference>
<dbReference type="InterPro" id="IPR011050">
    <property type="entry name" value="Pectin_lyase_fold/virulence"/>
</dbReference>
<dbReference type="NCBIfam" id="NF038177">
    <property type="entry name" value="epimerase_AlgG"/>
    <property type="match status" value="1"/>
</dbReference>
<dbReference type="NCBIfam" id="TIGR03804">
    <property type="entry name" value="para_beta_helix"/>
    <property type="match status" value="2"/>
</dbReference>
<dbReference type="Pfam" id="PF13229">
    <property type="entry name" value="Beta_helix"/>
    <property type="match status" value="1"/>
</dbReference>
<dbReference type="SMART" id="SM00722">
    <property type="entry name" value="CASH"/>
    <property type="match status" value="1"/>
</dbReference>
<dbReference type="SMART" id="SM00710">
    <property type="entry name" value="PbH1"/>
    <property type="match status" value="6"/>
</dbReference>
<dbReference type="SUPFAM" id="SSF51126">
    <property type="entry name" value="Pectin lyase-like"/>
    <property type="match status" value="1"/>
</dbReference>
<protein>
    <recommendedName>
        <fullName evidence="7">Mannuronan C5-epimerase</fullName>
        <ecNumber evidence="4">5.1.3.37</ecNumber>
    </recommendedName>
    <alternativeName>
        <fullName evidence="1">Poly(beta-D-mannuronate) C5 epimerase</fullName>
    </alternativeName>
</protein>
<reference key="1">
    <citation type="journal article" date="2003" name="J. Bacteriol.">
        <title>The Pseudomonas fluorescens AlgG protein, but not its mannuronan C-5-epimerase activity, is needed for alginate polymer formation.</title>
        <authorList>
            <person name="Gimmestad M."/>
            <person name="Sletta H."/>
            <person name="Ertesvaag H."/>
            <person name="Bakkevig K."/>
            <person name="Jain S."/>
            <person name="Suh S.-J."/>
            <person name="Skjaak-Braek G."/>
            <person name="Ellingsen T.E."/>
            <person name="Ohman D.E."/>
            <person name="Valla S."/>
        </authorList>
    </citation>
    <scope>NUCLEOTIDE SEQUENCE [GENOMIC DNA]</scope>
    <scope>FUNCTION</scope>
    <scope>DISRUPTION PHENOTYPE</scope>
    <scope>MUTAGENESIS OF SER-337; ASP-361; ARG-408 AND GLY-430</scope>
    <source>
        <strain>ATCC 17397 / DSM 50091 / CIP 73.25 / NCIMB 10525 / 12</strain>
    </source>
</reference>
<reference key="2">
    <citation type="journal article" date="2001" name="Gene">
        <title>Characterization of algG encoding C5-epimerase in the alginate biosynthetic gene cluster of Pseudomonas fluorescens.</title>
        <authorList>
            <person name="Morea A."/>
            <person name="Mathee K."/>
            <person name="Franklin M.J."/>
            <person name="Giacomini A."/>
            <person name="O'Regan M."/>
            <person name="Ohman D.E."/>
        </authorList>
    </citation>
    <scope>FUNCTION</scope>
    <scope>CATALYTIC ACTIVITY</scope>
    <scope>DISRUPTION PHENOTYPE</scope>
    <source>
        <strain>1586</strain>
    </source>
</reference>
<comment type="function">
    <text evidence="4 5">Catalyzes the epimerization of beta-D-mannuronate to alpha-L-guluronate during the synthesis of the linear polysaccharide alginate (PubMed:11707327). In addition, is part of a periplasmic protein complex that protects alginate from degradation by AlgL by channeling the newly formed alginate polymer through a scaffold that transfers the alginate polymer through the periplasmic space to the outer membrane secretin AlgE (PubMed:12775688).</text>
</comment>
<comment type="catalytic activity">
    <reaction evidence="4">
        <text>[(1-&gt;4)-beta-D-mannuronosyl](n) = [alginate](n)</text>
        <dbReference type="Rhea" id="RHEA:45572"/>
        <dbReference type="Rhea" id="RHEA-COMP:11264"/>
        <dbReference type="Rhea" id="RHEA-COMP:11270"/>
        <dbReference type="ChEBI" id="CHEBI:58187"/>
        <dbReference type="ChEBI" id="CHEBI:85311"/>
        <dbReference type="EC" id="5.1.3.37"/>
    </reaction>
</comment>
<comment type="pathway">
    <text evidence="7">Glycan biosynthesis; alginate biosynthesis.</text>
</comment>
<comment type="subcellular location">
    <subcellularLocation>
        <location evidence="1">Periplasm</location>
    </subcellularLocation>
</comment>
<comment type="disruption phenotype">
    <text evidence="4 5">Deletion mutant has a non-mucoid phenotype (PubMed:11707327, PubMed:12775688). Mutant produces predominantly an unsaturated disaccharide originating from degradation by AlgL (PubMed:12775688).</text>
</comment>
<comment type="similarity">
    <text evidence="7">Belongs to the D-mannuronate C5-epimerase family.</text>
</comment>
<accession>P59828</accession>
<feature type="signal peptide" evidence="3">
    <location>
        <begin position="1"/>
        <end position="30"/>
    </location>
</feature>
<feature type="chain" id="PRO_0000001126" description="Mannuronan C5-epimerase">
    <location>
        <begin position="31"/>
        <end position="529"/>
    </location>
</feature>
<feature type="repeat" description="PbH1 1" evidence="3">
    <location>
        <begin position="229"/>
        <end position="256"/>
    </location>
</feature>
<feature type="repeat" description="PbH1 2" evidence="3">
    <location>
        <begin position="291"/>
        <end position="313"/>
    </location>
</feature>
<feature type="repeat" description="PbH1 3" evidence="3">
    <location>
        <begin position="315"/>
        <end position="338"/>
    </location>
</feature>
<feature type="repeat" description="PbH1 4" evidence="3">
    <location>
        <begin position="340"/>
        <end position="362"/>
    </location>
</feature>
<feature type="repeat" description="PbH1 5" evidence="3">
    <location>
        <begin position="364"/>
        <end position="386"/>
    </location>
</feature>
<feature type="repeat" description="PbH1 6" evidence="3">
    <location>
        <begin position="387"/>
        <end position="409"/>
    </location>
</feature>
<feature type="active site" description="Proton acceptor" evidence="2">
    <location>
        <position position="312"/>
    </location>
</feature>
<feature type="mutagenesis site" description="Loss of function." evidence="5">
    <original>S</original>
    <variation>F</variation>
    <location>
        <position position="337"/>
    </location>
</feature>
<feature type="mutagenesis site" description="Loss of function." evidence="5">
    <original>D</original>
    <variation>N</variation>
    <location>
        <position position="361"/>
    </location>
</feature>
<feature type="mutagenesis site" description="Loss of function." evidence="5">
    <original>R</original>
    <variation>C</variation>
    <location>
        <position position="408"/>
    </location>
</feature>
<feature type="mutagenesis site" description="Loss of function." evidence="5">
    <original>G</original>
    <variation>D</variation>
    <location>
        <position position="430"/>
    </location>
</feature>